<dbReference type="EC" id="4.3.2.1" evidence="1"/>
<dbReference type="EMBL" id="CP000688">
    <property type="protein sequence ID" value="ABQ17652.1"/>
    <property type="molecule type" value="Genomic_DNA"/>
</dbReference>
<dbReference type="SMR" id="A5FQ74"/>
<dbReference type="KEGG" id="deb:DehaBAV1_1072"/>
<dbReference type="PATRIC" id="fig|216389.18.peg.1134"/>
<dbReference type="HOGENOM" id="CLU_027272_2_3_0"/>
<dbReference type="UniPathway" id="UPA00068">
    <property type="reaction ID" value="UER00114"/>
</dbReference>
<dbReference type="GO" id="GO:0005829">
    <property type="term" value="C:cytosol"/>
    <property type="evidence" value="ECO:0007669"/>
    <property type="project" value="TreeGrafter"/>
</dbReference>
<dbReference type="GO" id="GO:0004056">
    <property type="term" value="F:argininosuccinate lyase activity"/>
    <property type="evidence" value="ECO:0007669"/>
    <property type="project" value="UniProtKB-UniRule"/>
</dbReference>
<dbReference type="GO" id="GO:0042450">
    <property type="term" value="P:arginine biosynthetic process via ornithine"/>
    <property type="evidence" value="ECO:0007669"/>
    <property type="project" value="InterPro"/>
</dbReference>
<dbReference type="GO" id="GO:0006526">
    <property type="term" value="P:L-arginine biosynthetic process"/>
    <property type="evidence" value="ECO:0007669"/>
    <property type="project" value="UniProtKB-UniRule"/>
</dbReference>
<dbReference type="CDD" id="cd01359">
    <property type="entry name" value="Argininosuccinate_lyase"/>
    <property type="match status" value="1"/>
</dbReference>
<dbReference type="FunFam" id="1.10.275.10:FF:000002">
    <property type="entry name" value="Argininosuccinate lyase"/>
    <property type="match status" value="1"/>
</dbReference>
<dbReference type="FunFam" id="1.10.40.30:FF:000001">
    <property type="entry name" value="Argininosuccinate lyase"/>
    <property type="match status" value="1"/>
</dbReference>
<dbReference type="FunFam" id="1.20.200.10:FF:000015">
    <property type="entry name" value="argininosuccinate lyase isoform X2"/>
    <property type="match status" value="1"/>
</dbReference>
<dbReference type="Gene3D" id="1.10.40.30">
    <property type="entry name" value="Fumarase/aspartase (C-terminal domain)"/>
    <property type="match status" value="1"/>
</dbReference>
<dbReference type="Gene3D" id="1.20.200.10">
    <property type="entry name" value="Fumarase/aspartase (Central domain)"/>
    <property type="match status" value="1"/>
</dbReference>
<dbReference type="Gene3D" id="1.10.275.10">
    <property type="entry name" value="Fumarase/aspartase (N-terminal domain)"/>
    <property type="match status" value="1"/>
</dbReference>
<dbReference type="HAMAP" id="MF_00006">
    <property type="entry name" value="Arg_succ_lyase"/>
    <property type="match status" value="1"/>
</dbReference>
<dbReference type="InterPro" id="IPR029419">
    <property type="entry name" value="Arg_succ_lyase_C"/>
</dbReference>
<dbReference type="InterPro" id="IPR009049">
    <property type="entry name" value="Argininosuccinate_lyase"/>
</dbReference>
<dbReference type="InterPro" id="IPR024083">
    <property type="entry name" value="Fumarase/histidase_N"/>
</dbReference>
<dbReference type="InterPro" id="IPR020557">
    <property type="entry name" value="Fumarate_lyase_CS"/>
</dbReference>
<dbReference type="InterPro" id="IPR000362">
    <property type="entry name" value="Fumarate_lyase_fam"/>
</dbReference>
<dbReference type="InterPro" id="IPR022761">
    <property type="entry name" value="Fumarate_lyase_N"/>
</dbReference>
<dbReference type="InterPro" id="IPR008948">
    <property type="entry name" value="L-Aspartase-like"/>
</dbReference>
<dbReference type="NCBIfam" id="TIGR00838">
    <property type="entry name" value="argH"/>
    <property type="match status" value="1"/>
</dbReference>
<dbReference type="PANTHER" id="PTHR43814">
    <property type="entry name" value="ARGININOSUCCINATE LYASE"/>
    <property type="match status" value="1"/>
</dbReference>
<dbReference type="PANTHER" id="PTHR43814:SF1">
    <property type="entry name" value="ARGININOSUCCINATE LYASE"/>
    <property type="match status" value="1"/>
</dbReference>
<dbReference type="Pfam" id="PF14698">
    <property type="entry name" value="ASL_C2"/>
    <property type="match status" value="1"/>
</dbReference>
<dbReference type="Pfam" id="PF00206">
    <property type="entry name" value="Lyase_1"/>
    <property type="match status" value="1"/>
</dbReference>
<dbReference type="PRINTS" id="PR00145">
    <property type="entry name" value="ARGSUCLYASE"/>
</dbReference>
<dbReference type="PRINTS" id="PR00149">
    <property type="entry name" value="FUMRATELYASE"/>
</dbReference>
<dbReference type="SUPFAM" id="SSF48557">
    <property type="entry name" value="L-aspartase-like"/>
    <property type="match status" value="1"/>
</dbReference>
<dbReference type="PROSITE" id="PS00163">
    <property type="entry name" value="FUMARATE_LYASES"/>
    <property type="match status" value="1"/>
</dbReference>
<comment type="catalytic activity">
    <reaction evidence="1">
        <text>2-(N(omega)-L-arginino)succinate = fumarate + L-arginine</text>
        <dbReference type="Rhea" id="RHEA:24020"/>
        <dbReference type="ChEBI" id="CHEBI:29806"/>
        <dbReference type="ChEBI" id="CHEBI:32682"/>
        <dbReference type="ChEBI" id="CHEBI:57472"/>
        <dbReference type="EC" id="4.3.2.1"/>
    </reaction>
</comment>
<comment type="pathway">
    <text evidence="1">Amino-acid biosynthesis; L-arginine biosynthesis; L-arginine from L-ornithine and carbamoyl phosphate: step 3/3.</text>
</comment>
<comment type="subcellular location">
    <subcellularLocation>
        <location evidence="1">Cytoplasm</location>
    </subcellularLocation>
</comment>
<comment type="similarity">
    <text evidence="1">Belongs to the lyase 1 family. Argininosuccinate lyase subfamily.</text>
</comment>
<sequence length="461" mass="51271">MSHIRSRFSKPADELVVRYTTSLPFDWRLYKEDIKCSTAHARMLSKQGIISTEDSQSIINGLNAILTEIETGSFVFKPEMEDIHMAIEGRLFELIGEAAGRLHTARSRNDQVATDVHLFVKNACDKTINKIRTLQGTLLEQAEAHPQTALPGYTHMQIAQPVLLPHHLLAYFEMLERDCGRFTDARKRADVMPLGSGALAGVPYPLDREMVAKELGFSAISQNSLDAVSERDFILEYLSDAAICQMHLSRLSEEMVIWSSAEYAFVELDDAYTTGSSIMPQKKNPDVAELCRGKTGRVYGSLNTMLTVMKGLPLSYNRDLQEDKEPLFDCVDTLGDSLEVFAGMIKTAKFKPERMLRALEKGYVLATDIADYLVGKGESFRNSHGIVARLVSYAVAQNKTFGELSLAEYRQFSNLFEKDIYAVDIKSALNARNLPGGTAPKQIAQAIARAKKILAEAGVKN</sequence>
<name>ARLY_DEHMB</name>
<evidence type="ECO:0000255" key="1">
    <source>
        <dbReference type="HAMAP-Rule" id="MF_00006"/>
    </source>
</evidence>
<accession>A5FQ74</accession>
<keyword id="KW-0028">Amino-acid biosynthesis</keyword>
<keyword id="KW-0055">Arginine biosynthesis</keyword>
<keyword id="KW-0963">Cytoplasm</keyword>
<keyword id="KW-0456">Lyase</keyword>
<reference key="1">
    <citation type="submission" date="2007-05" db="EMBL/GenBank/DDBJ databases">
        <title>Complete sequence of Dehalococcoides sp. BAV1.</title>
        <authorList>
            <consortium name="US DOE Joint Genome Institute"/>
            <person name="Copeland A."/>
            <person name="Lucas S."/>
            <person name="Lapidus A."/>
            <person name="Barry K."/>
            <person name="Detter J.C."/>
            <person name="Glavina del Rio T."/>
            <person name="Hammon N."/>
            <person name="Israni S."/>
            <person name="Pitluck S."/>
            <person name="Lowry S."/>
            <person name="Clum A."/>
            <person name="Schmutz J."/>
            <person name="Larimer F."/>
            <person name="Land M."/>
            <person name="Hauser L."/>
            <person name="Kyrpides N."/>
            <person name="Kim E."/>
            <person name="Ritalahti K.M."/>
            <person name="Loeffler F."/>
            <person name="Richardson P."/>
        </authorList>
    </citation>
    <scope>NUCLEOTIDE SEQUENCE [LARGE SCALE GENOMIC DNA]</scope>
    <source>
        <strain>ATCC BAA-2100 / JCM 16839 / KCTC 5957 / BAV1</strain>
    </source>
</reference>
<proteinExistence type="inferred from homology"/>
<protein>
    <recommendedName>
        <fullName evidence="1">Argininosuccinate lyase</fullName>
        <shortName evidence="1">ASAL</shortName>
        <ecNumber evidence="1">4.3.2.1</ecNumber>
    </recommendedName>
    <alternativeName>
        <fullName evidence="1">Arginosuccinase</fullName>
    </alternativeName>
</protein>
<gene>
    <name evidence="1" type="primary">argH</name>
    <name type="ordered locus">DehaBAV1_1072</name>
</gene>
<organism>
    <name type="scientific">Dehalococcoides mccartyi (strain ATCC BAA-2100 / JCM 16839 / KCTC 5957 / BAV1)</name>
    <dbReference type="NCBI Taxonomy" id="216389"/>
    <lineage>
        <taxon>Bacteria</taxon>
        <taxon>Bacillati</taxon>
        <taxon>Chloroflexota</taxon>
        <taxon>Dehalococcoidia</taxon>
        <taxon>Dehalococcoidales</taxon>
        <taxon>Dehalococcoidaceae</taxon>
        <taxon>Dehalococcoides</taxon>
    </lineage>
</organism>
<feature type="chain" id="PRO_1000073845" description="Argininosuccinate lyase">
    <location>
        <begin position="1"/>
        <end position="461"/>
    </location>
</feature>